<name>NUOCD_YERPN</name>
<comment type="function">
    <text evidence="1">NDH-1 shuttles electrons from NADH, via FMN and iron-sulfur (Fe-S) centers, to quinones in the respiratory chain. The immediate electron acceptor for the enzyme in this species is believed to be ubiquinone. Couples the redox reaction to proton translocation (for every two electrons transferred, four hydrogen ions are translocated across the cytoplasmic membrane), and thus conserves the redox energy in a proton gradient.</text>
</comment>
<comment type="catalytic activity">
    <reaction evidence="1">
        <text>a quinone + NADH + 5 H(+)(in) = a quinol + NAD(+) + 4 H(+)(out)</text>
        <dbReference type="Rhea" id="RHEA:57888"/>
        <dbReference type="ChEBI" id="CHEBI:15378"/>
        <dbReference type="ChEBI" id="CHEBI:24646"/>
        <dbReference type="ChEBI" id="CHEBI:57540"/>
        <dbReference type="ChEBI" id="CHEBI:57945"/>
        <dbReference type="ChEBI" id="CHEBI:132124"/>
    </reaction>
</comment>
<comment type="subunit">
    <text evidence="1">NDH-1 is composed of 13 different subunits. Subunits NuoB, CD, E, F, and G constitute the peripheral sector of the complex.</text>
</comment>
<comment type="subcellular location">
    <subcellularLocation>
        <location evidence="1">Cell inner membrane</location>
        <topology evidence="1">Peripheral membrane protein</topology>
        <orientation evidence="1">Cytoplasmic side</orientation>
    </subcellularLocation>
</comment>
<comment type="similarity">
    <text evidence="1">In the N-terminal section; belongs to the complex I 30 kDa subunit family.</text>
</comment>
<comment type="similarity">
    <text evidence="1">In the C-terminal section; belongs to the complex I 49 kDa subunit family.</text>
</comment>
<accession>Q1CHQ3</accession>
<accession>C4GV72</accession>
<protein>
    <recommendedName>
        <fullName evidence="1">NADH-quinone oxidoreductase subunit C/D</fullName>
        <ecNumber evidence="1">7.1.1.-</ecNumber>
    </recommendedName>
    <alternativeName>
        <fullName evidence="1">NADH dehydrogenase I subunit C/D</fullName>
    </alternativeName>
    <alternativeName>
        <fullName evidence="1">NDH-1 subunit C/D</fullName>
    </alternativeName>
</protein>
<gene>
    <name evidence="1" type="primary">nuoC</name>
    <name evidence="1" type="synonym">nuoCD</name>
    <name evidence="1" type="synonym">nuoD</name>
    <name type="ordered locus">YPN_2148</name>
    <name type="ORF">YP516_2397</name>
</gene>
<organism>
    <name type="scientific">Yersinia pestis bv. Antiqua (strain Nepal516)</name>
    <dbReference type="NCBI Taxonomy" id="377628"/>
    <lineage>
        <taxon>Bacteria</taxon>
        <taxon>Pseudomonadati</taxon>
        <taxon>Pseudomonadota</taxon>
        <taxon>Gammaproteobacteria</taxon>
        <taxon>Enterobacterales</taxon>
        <taxon>Yersiniaceae</taxon>
        <taxon>Yersinia</taxon>
    </lineage>
</organism>
<evidence type="ECO:0000255" key="1">
    <source>
        <dbReference type="HAMAP-Rule" id="MF_01359"/>
    </source>
</evidence>
<reference key="1">
    <citation type="journal article" date="2006" name="J. Bacteriol.">
        <title>Complete genome sequence of Yersinia pestis strains Antiqua and Nepal516: evidence of gene reduction in an emerging pathogen.</title>
        <authorList>
            <person name="Chain P.S.G."/>
            <person name="Hu P."/>
            <person name="Malfatti S.A."/>
            <person name="Radnedge L."/>
            <person name="Larimer F."/>
            <person name="Vergez L.M."/>
            <person name="Worsham P."/>
            <person name="Chu M.C."/>
            <person name="Andersen G.L."/>
        </authorList>
    </citation>
    <scope>NUCLEOTIDE SEQUENCE [LARGE SCALE GENOMIC DNA]</scope>
    <source>
        <strain>Nepal516</strain>
    </source>
</reference>
<reference key="2">
    <citation type="submission" date="2009-04" db="EMBL/GenBank/DDBJ databases">
        <title>Yersinia pestis Nepal516A whole genome shotgun sequencing project.</title>
        <authorList>
            <person name="Plunkett G. III"/>
            <person name="Anderson B.D."/>
            <person name="Baumler D.J."/>
            <person name="Burland V."/>
            <person name="Cabot E.L."/>
            <person name="Glasner J.D."/>
            <person name="Mau B."/>
            <person name="Neeno-Eckwall E."/>
            <person name="Perna N.T."/>
            <person name="Munk A.C."/>
            <person name="Tapia R."/>
            <person name="Green L.D."/>
            <person name="Rogers Y.C."/>
            <person name="Detter J.C."/>
            <person name="Bruce D.C."/>
            <person name="Brettin T.S."/>
        </authorList>
    </citation>
    <scope>NUCLEOTIDE SEQUENCE [LARGE SCALE GENOMIC DNA]</scope>
    <source>
        <strain>Nepal516</strain>
    </source>
</reference>
<feature type="chain" id="PRO_0000358709" description="NADH-quinone oxidoreductase subunit C/D">
    <location>
        <begin position="1"/>
        <end position="598"/>
    </location>
</feature>
<feature type="region of interest" description="NADH dehydrogenase I subunit C" evidence="1">
    <location>
        <begin position="1"/>
        <end position="189"/>
    </location>
</feature>
<feature type="region of interest" description="NADH dehydrogenase I subunit D" evidence="1">
    <location>
        <begin position="213"/>
        <end position="598"/>
    </location>
</feature>
<dbReference type="EC" id="7.1.1.-" evidence="1"/>
<dbReference type="EMBL" id="CP000305">
    <property type="protein sequence ID" value="ABG18477.1"/>
    <property type="molecule type" value="Genomic_DNA"/>
</dbReference>
<dbReference type="EMBL" id="ACNQ01000013">
    <property type="protein sequence ID" value="EEO76200.1"/>
    <property type="molecule type" value="Genomic_DNA"/>
</dbReference>
<dbReference type="RefSeq" id="WP_002210277.1">
    <property type="nucleotide sequence ID" value="NZ_ACNQ01000013.1"/>
</dbReference>
<dbReference type="SMR" id="Q1CHQ3"/>
<dbReference type="GeneID" id="57976136"/>
<dbReference type="KEGG" id="ypn:YPN_2148"/>
<dbReference type="HOGENOM" id="CLU_015134_3_2_6"/>
<dbReference type="Proteomes" id="UP000008936">
    <property type="component" value="Chromosome"/>
</dbReference>
<dbReference type="GO" id="GO:0030964">
    <property type="term" value="C:NADH dehydrogenase complex"/>
    <property type="evidence" value="ECO:0007669"/>
    <property type="project" value="InterPro"/>
</dbReference>
<dbReference type="GO" id="GO:0005886">
    <property type="term" value="C:plasma membrane"/>
    <property type="evidence" value="ECO:0007669"/>
    <property type="project" value="UniProtKB-SubCell"/>
</dbReference>
<dbReference type="GO" id="GO:0051287">
    <property type="term" value="F:NAD binding"/>
    <property type="evidence" value="ECO:0007669"/>
    <property type="project" value="InterPro"/>
</dbReference>
<dbReference type="GO" id="GO:0008137">
    <property type="term" value="F:NADH dehydrogenase (ubiquinone) activity"/>
    <property type="evidence" value="ECO:0007669"/>
    <property type="project" value="InterPro"/>
</dbReference>
<dbReference type="GO" id="GO:0050136">
    <property type="term" value="F:NADH:ubiquinone reductase (non-electrogenic) activity"/>
    <property type="evidence" value="ECO:0007669"/>
    <property type="project" value="UniProtKB-UniRule"/>
</dbReference>
<dbReference type="GO" id="GO:0048038">
    <property type="term" value="F:quinone binding"/>
    <property type="evidence" value="ECO:0007669"/>
    <property type="project" value="UniProtKB-KW"/>
</dbReference>
<dbReference type="FunFam" id="1.10.645.10:FF:000001">
    <property type="entry name" value="NADH-quinone oxidoreductase subunit C/D"/>
    <property type="match status" value="1"/>
</dbReference>
<dbReference type="FunFam" id="3.30.460.80:FF:000001">
    <property type="entry name" value="NADH-quinone oxidoreductase subunit C/D"/>
    <property type="match status" value="1"/>
</dbReference>
<dbReference type="Gene3D" id="1.10.645.10">
    <property type="entry name" value="Cytochrome-c3 Hydrogenase, chain B"/>
    <property type="match status" value="1"/>
</dbReference>
<dbReference type="Gene3D" id="3.30.460.80">
    <property type="entry name" value="NADH:ubiquinone oxidoreductase, 30kDa subunit"/>
    <property type="match status" value="1"/>
</dbReference>
<dbReference type="HAMAP" id="MF_01357">
    <property type="entry name" value="NDH1_NuoC"/>
    <property type="match status" value="1"/>
</dbReference>
<dbReference type="HAMAP" id="MF_01359">
    <property type="entry name" value="NDH1_NuoCD_1"/>
    <property type="match status" value="1"/>
</dbReference>
<dbReference type="HAMAP" id="MF_01358">
    <property type="entry name" value="NDH1_NuoD"/>
    <property type="match status" value="1"/>
</dbReference>
<dbReference type="InterPro" id="IPR010218">
    <property type="entry name" value="NADH_DH_suC"/>
</dbReference>
<dbReference type="InterPro" id="IPR023062">
    <property type="entry name" value="NADH_DH_suCD"/>
</dbReference>
<dbReference type="InterPro" id="IPR001135">
    <property type="entry name" value="NADH_Q_OxRdtase_suD"/>
</dbReference>
<dbReference type="InterPro" id="IPR037232">
    <property type="entry name" value="NADH_quin_OxRdtase_su_C/D-like"/>
</dbReference>
<dbReference type="InterPro" id="IPR001268">
    <property type="entry name" value="NADH_UbQ_OxRdtase_30kDa_su"/>
</dbReference>
<dbReference type="InterPro" id="IPR014029">
    <property type="entry name" value="NADH_UbQ_OxRdtase_49kDa_CS"/>
</dbReference>
<dbReference type="InterPro" id="IPR022885">
    <property type="entry name" value="NDH1_su_D/H"/>
</dbReference>
<dbReference type="InterPro" id="IPR029014">
    <property type="entry name" value="NiFe-Hase_large"/>
</dbReference>
<dbReference type="NCBIfam" id="TIGR01961">
    <property type="entry name" value="NuoC_fam"/>
    <property type="match status" value="1"/>
</dbReference>
<dbReference type="NCBIfam" id="TIGR01962">
    <property type="entry name" value="NuoD"/>
    <property type="match status" value="1"/>
</dbReference>
<dbReference type="NCBIfam" id="NF004739">
    <property type="entry name" value="PRK06075.1"/>
    <property type="match status" value="1"/>
</dbReference>
<dbReference type="NCBIfam" id="NF008728">
    <property type="entry name" value="PRK11742.1"/>
    <property type="match status" value="1"/>
</dbReference>
<dbReference type="PANTHER" id="PTHR11993:SF45">
    <property type="entry name" value="NADH-QUINONE OXIDOREDUCTASE SUBUNIT C_D"/>
    <property type="match status" value="1"/>
</dbReference>
<dbReference type="PANTHER" id="PTHR11993">
    <property type="entry name" value="NADH-UBIQUINONE OXIDOREDUCTASE 49 KDA SUBUNIT"/>
    <property type="match status" value="1"/>
</dbReference>
<dbReference type="Pfam" id="PF00329">
    <property type="entry name" value="Complex1_30kDa"/>
    <property type="match status" value="1"/>
</dbReference>
<dbReference type="Pfam" id="PF00346">
    <property type="entry name" value="Complex1_49kDa"/>
    <property type="match status" value="1"/>
</dbReference>
<dbReference type="SUPFAM" id="SSF56762">
    <property type="entry name" value="HydB/Nqo4-like"/>
    <property type="match status" value="1"/>
</dbReference>
<dbReference type="SUPFAM" id="SSF143243">
    <property type="entry name" value="Nqo5-like"/>
    <property type="match status" value="1"/>
</dbReference>
<dbReference type="PROSITE" id="PS00535">
    <property type="entry name" value="COMPLEX1_49K"/>
    <property type="match status" value="1"/>
</dbReference>
<proteinExistence type="inferred from homology"/>
<keyword id="KW-0997">Cell inner membrane</keyword>
<keyword id="KW-1003">Cell membrane</keyword>
<keyword id="KW-0472">Membrane</keyword>
<keyword id="KW-0511">Multifunctional enzyme</keyword>
<keyword id="KW-0520">NAD</keyword>
<keyword id="KW-0874">Quinone</keyword>
<keyword id="KW-1278">Translocase</keyword>
<keyword id="KW-0813">Transport</keyword>
<keyword id="KW-0830">Ubiquinone</keyword>
<sequence length="598" mass="68886">MTDLTTSDSLQPAWQTRDHLDDPVIGELSNRFGPEAFVVQATRTGMPVVWVKREQLLEVMSFLRKQPKPYVMLFDLHGVDERLRTHRQGLPDADFSVFYHLLSIERNRDIMLKVALSEKDLHVSTATKIFPNANWYERETWEMFGITFDGHPHLTRIMMPQSWEGHPLRKDYPARATEFDPYVLTKQKEDLEMESLTFKPEDWGMKRGTENEDFMFLNLGPNHPSSHGAFRIVLQLDGEEIIDCVPDVGYHHRGAEKMGERQSWHSYIPYTDRIEYLGGCVNEMPYVLAVEKLAGIVVPDRVNTIRVMLSELFRINSHLLYISTFIQDVGAMTPVFFAFTDRQKVYDVIEAITGFRMHPAWFRIGGVAHDLPRGWERLLRDFLDWMPKRLDSYVKAALQNSILKGRSVGVAAYNAKEALEWGVTGAGLRATGVEFDVRKWRPYSGYENFDFEVPVGNNGDCYDRVMLKVEELRQSLRILEQCYKNMPEGPFKADHPLTTPPPKERTLQHIETLITHFLQVSWGPVMPANESFQMIEATKGINSYYLTSDGSTMSYRTRIRTPSYAHLQQIPSVIRGSLVSDLIVYLGSIDFVMSDVDR</sequence>